<name>UPPP2_HALH5</name>
<feature type="chain" id="PRO_0000151100" description="Undecaprenyl-diphosphatase 2">
    <location>
        <begin position="1"/>
        <end position="278"/>
    </location>
</feature>
<feature type="transmembrane region" description="Helical" evidence="1">
    <location>
        <begin position="1"/>
        <end position="21"/>
    </location>
</feature>
<feature type="transmembrane region" description="Helical" evidence="1">
    <location>
        <begin position="38"/>
        <end position="58"/>
    </location>
</feature>
<feature type="transmembrane region" description="Helical" evidence="1">
    <location>
        <begin position="85"/>
        <end position="105"/>
    </location>
</feature>
<feature type="transmembrane region" description="Helical" evidence="1">
    <location>
        <begin position="118"/>
        <end position="138"/>
    </location>
</feature>
<feature type="transmembrane region" description="Helical" evidence="1">
    <location>
        <begin position="191"/>
        <end position="211"/>
    </location>
</feature>
<feature type="transmembrane region" description="Helical" evidence="1">
    <location>
        <begin position="223"/>
        <end position="243"/>
    </location>
</feature>
<feature type="transmembrane region" description="Helical" evidence="1">
    <location>
        <begin position="251"/>
        <end position="271"/>
    </location>
</feature>
<keyword id="KW-0046">Antibiotic resistance</keyword>
<keyword id="KW-1003">Cell membrane</keyword>
<keyword id="KW-0133">Cell shape</keyword>
<keyword id="KW-0961">Cell wall biogenesis/degradation</keyword>
<keyword id="KW-0378">Hydrolase</keyword>
<keyword id="KW-0472">Membrane</keyword>
<keyword id="KW-0573">Peptidoglycan synthesis</keyword>
<keyword id="KW-1185">Reference proteome</keyword>
<keyword id="KW-0812">Transmembrane</keyword>
<keyword id="KW-1133">Transmembrane helix</keyword>
<organism>
    <name type="scientific">Halalkalibacterium halodurans (strain ATCC BAA-125 / DSM 18197 / FERM 7344 / JCM 9153 / C-125)</name>
    <name type="common">Bacillus halodurans</name>
    <dbReference type="NCBI Taxonomy" id="272558"/>
    <lineage>
        <taxon>Bacteria</taxon>
        <taxon>Bacillati</taxon>
        <taxon>Bacillota</taxon>
        <taxon>Bacilli</taxon>
        <taxon>Bacillales</taxon>
        <taxon>Bacillaceae</taxon>
        <taxon>Halalkalibacterium (ex Joshi et al. 2022)</taxon>
    </lineage>
</organism>
<proteinExistence type="inferred from homology"/>
<sequence>MSIIEAIIIGIVQGITEFLPISSTAHIVITQFLFDYTFPGFGFEIFLHIASILAVILYFRKDLLQVIVGFFSYFKDKSEENRIQFMFAIYIIVATGITGVLGLLLEDLVGAQMKTPPFIAGALIITGTFLIIIERFFVYKDRTVKDMTLKDSIIVGLGQTLAVFPGISRSGATLITALFSGLNKETAVRYSFLLSIPVILGTSVLAIGDLLDGTLVEQVGGLPLIISFIVTFFFSWLGIIWLIDFLKRSKLIYFAFYCFALAIFVFFYFDHNMTIDLE</sequence>
<protein>
    <recommendedName>
        <fullName evidence="1">Undecaprenyl-diphosphatase 2</fullName>
        <ecNumber evidence="1">3.6.1.27</ecNumber>
    </recommendedName>
    <alternativeName>
        <fullName evidence="1">Bacitracin resistance protein 2</fullName>
    </alternativeName>
    <alternativeName>
        <fullName evidence="1">Undecaprenyl pyrophosphate phosphatase 2</fullName>
    </alternativeName>
</protein>
<reference key="1">
    <citation type="journal article" date="2000" name="Nucleic Acids Res.">
        <title>Complete genome sequence of the alkaliphilic bacterium Bacillus halodurans and genomic sequence comparison with Bacillus subtilis.</title>
        <authorList>
            <person name="Takami H."/>
            <person name="Nakasone K."/>
            <person name="Takaki Y."/>
            <person name="Maeno G."/>
            <person name="Sasaki R."/>
            <person name="Masui N."/>
            <person name="Fuji F."/>
            <person name="Hirama C."/>
            <person name="Nakamura Y."/>
            <person name="Ogasawara N."/>
            <person name="Kuhara S."/>
            <person name="Horikoshi K."/>
        </authorList>
    </citation>
    <scope>NUCLEOTIDE SEQUENCE [LARGE SCALE GENOMIC DNA]</scope>
    <source>
        <strain>ATCC BAA-125 / DSM 18197 / FERM 7344 / JCM 9153 / C-125</strain>
    </source>
</reference>
<gene>
    <name evidence="1" type="primary">uppP2</name>
    <name type="synonym">bacA2</name>
    <name type="synonym">upk2</name>
    <name type="ordered locus">BH1521</name>
</gene>
<evidence type="ECO:0000255" key="1">
    <source>
        <dbReference type="HAMAP-Rule" id="MF_01006"/>
    </source>
</evidence>
<dbReference type="EC" id="3.6.1.27" evidence="1"/>
<dbReference type="EMBL" id="BA000004">
    <property type="protein sequence ID" value="BAB05240.1"/>
    <property type="molecule type" value="Genomic_DNA"/>
</dbReference>
<dbReference type="PIR" id="A83840">
    <property type="entry name" value="A83840"/>
</dbReference>
<dbReference type="RefSeq" id="WP_010897686.1">
    <property type="nucleotide sequence ID" value="NC_002570.2"/>
</dbReference>
<dbReference type="SMR" id="Q9KCP8"/>
<dbReference type="STRING" id="272558.gene:10727419"/>
<dbReference type="KEGG" id="bha:BH1521"/>
<dbReference type="eggNOG" id="COG1968">
    <property type="taxonomic scope" value="Bacteria"/>
</dbReference>
<dbReference type="HOGENOM" id="CLU_060296_1_2_9"/>
<dbReference type="OrthoDB" id="9808289at2"/>
<dbReference type="Proteomes" id="UP000001258">
    <property type="component" value="Chromosome"/>
</dbReference>
<dbReference type="GO" id="GO:0005886">
    <property type="term" value="C:plasma membrane"/>
    <property type="evidence" value="ECO:0007669"/>
    <property type="project" value="UniProtKB-SubCell"/>
</dbReference>
<dbReference type="GO" id="GO:0050380">
    <property type="term" value="F:undecaprenyl-diphosphatase activity"/>
    <property type="evidence" value="ECO:0007669"/>
    <property type="project" value="UniProtKB-UniRule"/>
</dbReference>
<dbReference type="GO" id="GO:0071555">
    <property type="term" value="P:cell wall organization"/>
    <property type="evidence" value="ECO:0007669"/>
    <property type="project" value="UniProtKB-KW"/>
</dbReference>
<dbReference type="GO" id="GO:0009252">
    <property type="term" value="P:peptidoglycan biosynthetic process"/>
    <property type="evidence" value="ECO:0007669"/>
    <property type="project" value="UniProtKB-KW"/>
</dbReference>
<dbReference type="GO" id="GO:0008360">
    <property type="term" value="P:regulation of cell shape"/>
    <property type="evidence" value="ECO:0007669"/>
    <property type="project" value="UniProtKB-KW"/>
</dbReference>
<dbReference type="GO" id="GO:0046677">
    <property type="term" value="P:response to antibiotic"/>
    <property type="evidence" value="ECO:0007669"/>
    <property type="project" value="UniProtKB-UniRule"/>
</dbReference>
<dbReference type="HAMAP" id="MF_01006">
    <property type="entry name" value="Undec_diphosphatase"/>
    <property type="match status" value="1"/>
</dbReference>
<dbReference type="InterPro" id="IPR003824">
    <property type="entry name" value="UppP"/>
</dbReference>
<dbReference type="PANTHER" id="PTHR30622">
    <property type="entry name" value="UNDECAPRENYL-DIPHOSPHATASE"/>
    <property type="match status" value="1"/>
</dbReference>
<dbReference type="PANTHER" id="PTHR30622:SF2">
    <property type="entry name" value="UNDECAPRENYL-DIPHOSPHATASE"/>
    <property type="match status" value="1"/>
</dbReference>
<dbReference type="Pfam" id="PF02673">
    <property type="entry name" value="BacA"/>
    <property type="match status" value="1"/>
</dbReference>
<accession>Q9KCP8</accession>
<comment type="function">
    <text evidence="1">Catalyzes the dephosphorylation of undecaprenyl diphosphate (UPP). Confers resistance to bacitracin.</text>
</comment>
<comment type="catalytic activity">
    <reaction evidence="1">
        <text>di-trans,octa-cis-undecaprenyl diphosphate + H2O = di-trans,octa-cis-undecaprenyl phosphate + phosphate + H(+)</text>
        <dbReference type="Rhea" id="RHEA:28094"/>
        <dbReference type="ChEBI" id="CHEBI:15377"/>
        <dbReference type="ChEBI" id="CHEBI:15378"/>
        <dbReference type="ChEBI" id="CHEBI:43474"/>
        <dbReference type="ChEBI" id="CHEBI:58405"/>
        <dbReference type="ChEBI" id="CHEBI:60392"/>
        <dbReference type="EC" id="3.6.1.27"/>
    </reaction>
</comment>
<comment type="subcellular location">
    <subcellularLocation>
        <location evidence="1">Cell membrane</location>
        <topology evidence="1">Multi-pass membrane protein</topology>
    </subcellularLocation>
</comment>
<comment type="miscellaneous">
    <text>Bacitracin is thought to be involved in the inhibition of peptidoglycan synthesis by sequestering undecaprenyl diphosphate, thereby reducing the pool of lipid carrier available.</text>
</comment>
<comment type="similarity">
    <text evidence="1">Belongs to the UppP family.</text>
</comment>